<reference key="1">
    <citation type="journal article" date="1996" name="Oncogene">
        <title>Fusion of the MLL gene with two different genes, AF-6 and AF-5alpha, by a complex translocation involving chromosomes 5, 6, 8 and 11 in infant leukemia.</title>
        <authorList>
            <person name="Taki T."/>
            <person name="Hayashi Y."/>
            <person name="Taniwaki M."/>
            <person name="Seto M."/>
            <person name="Ueda R."/>
            <person name="Hanada R."/>
            <person name="Suzukawa K."/>
            <person name="Yokota J."/>
            <person name="Morishita K."/>
        </authorList>
    </citation>
    <scope>NUCLEOTIDE SEQUENCE [MRNA]</scope>
    <scope>CHROMOSOMAL TRANSLOCATION WITH KMT2A/MLL1</scope>
    <scope>TISSUE SPECIFICITY</scope>
</reference>
<reference key="2">
    <citation type="submission" date="2000-10" db="EMBL/GenBank/DDBJ databases">
        <title>Molecular cloning of human p33.</title>
        <authorList>
            <person name="Chang M.S."/>
            <person name="Yang Y.C."/>
        </authorList>
    </citation>
    <scope>NUCLEOTIDE SEQUENCE [MRNA]</scope>
</reference>
<reference key="3">
    <citation type="submission" date="2000-10" db="EMBL/GenBank/DDBJ databases">
        <title>Molecular cloning of FKSG14, a novel gene located on chromosome 5.</title>
        <authorList>
            <person name="Wang Y.-G."/>
        </authorList>
    </citation>
    <scope>NUCLEOTIDE SEQUENCE [MRNA]</scope>
    <source>
        <tissue>Carcinoma</tissue>
    </source>
</reference>
<reference key="4">
    <citation type="journal article" date="2004" name="Genome Res.">
        <title>The status, quality, and expansion of the NIH full-length cDNA project: the Mammalian Gene Collection (MGC).</title>
        <authorList>
            <consortium name="The MGC Project Team"/>
        </authorList>
    </citation>
    <scope>NUCLEOTIDE SEQUENCE [LARGE SCALE MRNA]</scope>
    <source>
        <tissue>Brain</tissue>
        <tissue>Gall bladder</tissue>
    </source>
</reference>
<reference key="5">
    <citation type="journal article" date="2006" name="Genes Cells">
        <title>Comprehensive analysis of the ICEN (Interphase Centromere Complex) components enriched in the CENP-A chromatin of human cells.</title>
        <authorList>
            <person name="Izuta H."/>
            <person name="Ikeno M."/>
            <person name="Suzuki N."/>
            <person name="Tomonaga T."/>
            <person name="Nozaki N."/>
            <person name="Obuse C."/>
            <person name="Kisu Y."/>
            <person name="Goshima N."/>
            <person name="Nomura F."/>
            <person name="Nomura N."/>
            <person name="Yoda K."/>
        </authorList>
    </citation>
    <scope>FUNCTION</scope>
    <scope>SUBCELLULAR LOCATION</scope>
</reference>
<reference key="6">
    <citation type="journal article" date="2006" name="Nat. Cell Biol.">
        <title>The CENP-H-I complex is required for the efficient incorporation of newly synthesized CENP-A into centromeres.</title>
        <authorList>
            <person name="Okada M."/>
            <person name="Cheeseman I.M."/>
            <person name="Hori T."/>
            <person name="Okawa K."/>
            <person name="McLeod I.X."/>
            <person name="Yates J.R. III"/>
            <person name="Desai A."/>
            <person name="Fukagawa T."/>
        </authorList>
    </citation>
    <scope>IDENTIFICATION BY MASS SPECTROMETRY</scope>
    <scope>IDENTIFICATION IN A COMPLEX WITH CENPH; CENPI; CENPN; CENPO; CENPP; CENPQ; CENPR AND CENPU</scope>
    <scope>FUNCTION</scope>
    <scope>SUBCELLULAR LOCATION</scope>
</reference>
<reference key="7">
    <citation type="journal article" date="2006" name="Nat. Cell Biol.">
        <title>The human CENP-A centromeric nucleosome-associated complex.</title>
        <authorList>
            <person name="Foltz D.R."/>
            <person name="Jansen L.E.T."/>
            <person name="Black B.E."/>
            <person name="Bailey A.O."/>
            <person name="Yates J.R. III"/>
            <person name="Cleveland D.W."/>
        </authorList>
    </citation>
    <scope>IDENTIFICATION BY MASS SPECTROMETRY</scope>
    <scope>IDENTIFICATION IN THE CENPA-CAD COMPLEX WITH CENPI; CENPL; CENPO; CENPP; CENPQ; CENPR AND CENPS</scope>
</reference>
<reference key="8">
    <citation type="journal article" date="2008" name="Mol. Biol. Cell">
        <title>KNL1 and the CENP-H/I/K complex coordinately direct kinetochore assembly in vertebrates.</title>
        <authorList>
            <person name="Cheeseman I.M."/>
            <person name="Hori T."/>
            <person name="Fukagawa T."/>
            <person name="Desai A."/>
        </authorList>
    </citation>
    <scope>FUNCTION</scope>
</reference>
<reference key="9">
    <citation type="journal article" date="2009" name="Sci. China, Ser. C, Life Sci.">
        <title>CENP-K and CENP-H may form coiled-coils in the kinetochores.</title>
        <authorList>
            <person name="Qiu S."/>
            <person name="Wang J."/>
            <person name="Yu C."/>
            <person name="He D."/>
        </authorList>
    </citation>
    <scope>INTERACTION WITH CENPH</scope>
</reference>
<protein>
    <recommendedName>
        <fullName>Centromere protein K</fullName>
        <shortName>CENP-K</shortName>
    </recommendedName>
    <alternativeName>
        <fullName>Interphase centromere complex protein 37</fullName>
    </alternativeName>
    <alternativeName>
        <fullName>Protein AF-5alpha</fullName>
    </alternativeName>
    <alternativeName>
        <fullName>p33</fullName>
    </alternativeName>
</protein>
<proteinExistence type="evidence at protein level"/>
<gene>
    <name type="primary">CENPK</name>
    <name type="synonym">ICEN37</name>
    <name type="ORF">FKSG14</name>
</gene>
<comment type="function">
    <text evidence="4 5 6">Component of the CENPA-CAD (nucleosome distal) complex, a complex recruited to centromeres which is involved in assembly of kinetochore proteins, mitotic progression and chromosome segregation. May be involved in incorporation of newly synthesized CENPA into centromeres via its interaction with the CENPA-NAC complex. Acts in coordination with KNL1 to recruit the NDC80 complex to the outer kinetochore.</text>
</comment>
<comment type="subunit">
    <text evidence="3 4 7">Component of the CENPA-CAD complex, composed of CENPI, CENPK, CENPL, CENPO, CENPP, CENPQ, CENPR and CENPS. The CENPA-CAD complex interacts with the CENPA-NAC complex, at least composed of CENPA, CENPC, CENPH, CENPM, CENPN, CENPT and CENPU. Interacts directly with CENPH.</text>
</comment>
<comment type="interaction">
    <interactant intactId="EBI-6871750">
        <id>Q9BS16</id>
    </interactant>
    <interactant intactId="EBI-1003700">
        <id>Q9H3R5</id>
        <label>CENPH</label>
    </interactant>
    <organismsDiffer>false</organismsDiffer>
    <experiments>10</experiments>
</comment>
<comment type="interaction">
    <interactant intactId="EBI-6871750">
        <id>Q9BS16</id>
    </interactant>
    <interactant intactId="EBI-11085153">
        <id>Q92674</id>
        <label>CENPI</label>
    </interactant>
    <organismsDiffer>false</organismsDiffer>
    <experiments>2</experiments>
</comment>
<comment type="interaction">
    <interactant intactId="EBI-6871750">
        <id>Q9BS16</id>
    </interactant>
    <interactant intactId="EBI-748896">
        <id>Q96HT8</id>
        <label>MRFAP1L1</label>
    </interactant>
    <organismsDiffer>false</organismsDiffer>
    <experiments>3</experiments>
</comment>
<comment type="interaction">
    <interactant intactId="EBI-6871750">
        <id>Q9BS16</id>
    </interactant>
    <interactant intactId="EBI-594898">
        <id>O75381</id>
        <label>PEX14</label>
    </interactant>
    <organismsDiffer>false</organismsDiffer>
    <experiments>3</experiments>
</comment>
<comment type="interaction">
    <interactant intactId="EBI-6871750">
        <id>Q9BS16</id>
    </interactant>
    <interactant intactId="EBI-743502">
        <id>Q8WWV3</id>
        <label>RTN4IP1</label>
    </interactant>
    <organismsDiffer>false</organismsDiffer>
    <experiments>3</experiments>
</comment>
<comment type="interaction">
    <interactant intactId="EBI-6871750">
        <id>Q9BS16</id>
    </interactant>
    <interactant intactId="EBI-712969">
        <id>Q9Y3C0</id>
        <label>WASHC3</label>
    </interactant>
    <organismsDiffer>false</organismsDiffer>
    <experiments>3</experiments>
</comment>
<comment type="interaction">
    <interactant intactId="EBI-6871750">
        <id>Q9BS16</id>
    </interactant>
    <interactant intactId="EBI-10259496">
        <id>Q86V28</id>
    </interactant>
    <organismsDiffer>false</organismsDiffer>
    <experiments>3</experiments>
</comment>
<comment type="subcellular location">
    <subcellularLocation>
        <location>Nucleus</location>
    </subcellularLocation>
    <subcellularLocation>
        <location>Chromosome</location>
        <location>Centromere</location>
    </subcellularLocation>
    <subcellularLocation>
        <location>Chromosome</location>
        <location>Centromere</location>
        <location>Kinetochore</location>
    </subcellularLocation>
    <text>Localizes exclusively in the centromeres. The CENPA-CAD complex is probably recruited on centromeres by the CENPA-NAC complex.</text>
</comment>
<comment type="tissue specificity">
    <text evidence="8">Detected in several fetal organs with highest levels in fetal liver. In adults, it is weakly expressed in lung and placenta.</text>
</comment>
<comment type="disease">
    <text evidence="8">Chromosomal aberrations involving CENPK are a cause of acute leukemias. Translocation t(5;11)(q12;q23) with KMT2A/MLL1.</text>
</comment>
<comment type="similarity">
    <text evidence="9">Belongs to the CENP-K/MCM22 family.</text>
</comment>
<feature type="chain" id="PRO_0000249482" description="Centromere protein K">
    <location>
        <begin position="1"/>
        <end position="269"/>
    </location>
</feature>
<feature type="region of interest" description="Disordered" evidence="2">
    <location>
        <begin position="1"/>
        <end position="20"/>
    </location>
</feature>
<feature type="coiled-coil region" evidence="1">
    <location>
        <begin position="22"/>
        <end position="42"/>
    </location>
</feature>
<feature type="coiled-coil region" evidence="1">
    <location>
        <begin position="98"/>
        <end position="151"/>
    </location>
</feature>
<feature type="compositionally biased region" description="Acidic residues" evidence="2">
    <location>
        <begin position="1"/>
        <end position="10"/>
    </location>
</feature>
<feature type="site" description="Breakpoint for translocation to form KMT2A/MLL1-CENPK oncogene">
    <location>
        <begin position="96"/>
        <end position="97"/>
    </location>
</feature>
<feature type="sequence conflict" description="In Ref. 3; AAG31004." evidence="9" ref="3">
    <original>I</original>
    <variation>M</variation>
    <location>
        <position position="45"/>
    </location>
</feature>
<feature type="sequence conflict" description="In Ref. 3; AAG31004." evidence="9" ref="3">
    <original>L</original>
    <variation>W</variation>
    <location>
        <position position="59"/>
    </location>
</feature>
<feature type="sequence conflict" description="In Ref. 3; AAG31004." evidence="9" ref="3">
    <original>C</original>
    <variation>G</variation>
    <location>
        <position position="66"/>
    </location>
</feature>
<feature type="sequence conflict" description="In Ref. 3; AAG31004." evidence="9" ref="3">
    <original>W</original>
    <variation>G</variation>
    <location>
        <position position="74"/>
    </location>
</feature>
<feature type="sequence conflict" description="In Ref. 3; AAG31004." evidence="9" ref="3">
    <original>T</original>
    <variation>I</variation>
    <location>
        <position position="81"/>
    </location>
</feature>
<feature type="helix" evidence="11">
    <location>
        <begin position="20"/>
        <end position="42"/>
    </location>
</feature>
<feature type="strand" evidence="11">
    <location>
        <begin position="52"/>
        <end position="55"/>
    </location>
</feature>
<feature type="helix" evidence="11">
    <location>
        <begin position="56"/>
        <end position="75"/>
    </location>
</feature>
<feature type="helix" evidence="11">
    <location>
        <begin position="87"/>
        <end position="148"/>
    </location>
</feature>
<feature type="strand" evidence="12">
    <location>
        <begin position="150"/>
        <end position="152"/>
    </location>
</feature>
<feature type="helix" evidence="10">
    <location>
        <begin position="166"/>
        <end position="187"/>
    </location>
</feature>
<feature type="helix" evidence="10">
    <location>
        <begin position="212"/>
        <end position="225"/>
    </location>
</feature>
<feature type="strand" evidence="11">
    <location>
        <begin position="236"/>
        <end position="238"/>
    </location>
</feature>
<feature type="helix" evidence="10">
    <location>
        <begin position="240"/>
        <end position="248"/>
    </location>
</feature>
<feature type="strand" evidence="10">
    <location>
        <begin position="251"/>
        <end position="254"/>
    </location>
</feature>
<feature type="strand" evidence="10">
    <location>
        <begin position="261"/>
        <end position="264"/>
    </location>
</feature>
<accession>Q9BS16</accession>
<accession>Q9H4L0</accession>
<name>CENPK_HUMAN</name>
<evidence type="ECO:0000255" key="1"/>
<evidence type="ECO:0000256" key="2">
    <source>
        <dbReference type="SAM" id="MobiDB-lite"/>
    </source>
</evidence>
<evidence type="ECO:0000269" key="3">
    <source>
    </source>
</evidence>
<evidence type="ECO:0000269" key="4">
    <source>
    </source>
</evidence>
<evidence type="ECO:0000269" key="5">
    <source>
    </source>
</evidence>
<evidence type="ECO:0000269" key="6">
    <source>
    </source>
</evidence>
<evidence type="ECO:0000269" key="7">
    <source>
    </source>
</evidence>
<evidence type="ECO:0000269" key="8">
    <source>
    </source>
</evidence>
<evidence type="ECO:0000305" key="9"/>
<evidence type="ECO:0007829" key="10">
    <source>
        <dbReference type="PDB" id="7PB4"/>
    </source>
</evidence>
<evidence type="ECO:0007829" key="11">
    <source>
        <dbReference type="PDB" id="7R5S"/>
    </source>
</evidence>
<evidence type="ECO:0007829" key="12">
    <source>
        <dbReference type="PDB" id="7XHO"/>
    </source>
</evidence>
<organism>
    <name type="scientific">Homo sapiens</name>
    <name type="common">Human</name>
    <dbReference type="NCBI Taxonomy" id="9606"/>
    <lineage>
        <taxon>Eukaryota</taxon>
        <taxon>Metazoa</taxon>
        <taxon>Chordata</taxon>
        <taxon>Craniata</taxon>
        <taxon>Vertebrata</taxon>
        <taxon>Euteleostomi</taxon>
        <taxon>Mammalia</taxon>
        <taxon>Eutheria</taxon>
        <taxon>Euarchontoglires</taxon>
        <taxon>Primates</taxon>
        <taxon>Haplorrhini</taxon>
        <taxon>Catarrhini</taxon>
        <taxon>Hominidae</taxon>
        <taxon>Homo</taxon>
    </lineage>
</organism>
<sequence length="269" mass="31655">MNQEDLDPDSTTDVGDVTNTEEELIRECEEMWKDMEECQNKLSLIGTETLTDSNAQLSLLIMQVKCLTAELSQWQKKTPETIPLTEDVLITLGKEEFQKLRQDLEMVLSTKESKNEKLKEDLEREQRWLDEQQQIMESLNVLHSELKNKVETFSESRIFNELKTKMLNIKEYKEKLLSTLGEFLEDHFPLPDRSVKKKKKNIQESSVNLITLHEMLEILINRLFDVPHDPYVKISDSFWPPYVELLLRNGIALRHPEDPTRIRLEAFHQ</sequence>
<keyword id="KW-0002">3D-structure</keyword>
<keyword id="KW-0137">Centromere</keyword>
<keyword id="KW-0160">Chromosomal rearrangement</keyword>
<keyword id="KW-0158">Chromosome</keyword>
<keyword id="KW-0175">Coiled coil</keyword>
<keyword id="KW-0995">Kinetochore</keyword>
<keyword id="KW-0539">Nucleus</keyword>
<keyword id="KW-1267">Proteomics identification</keyword>
<keyword id="KW-1185">Reference proteome</keyword>
<dbReference type="EMBL" id="AY033646">
    <property type="protein sequence ID" value="AAK59382.1"/>
    <property type="molecule type" value="mRNA"/>
</dbReference>
<dbReference type="EMBL" id="AF315941">
    <property type="protein sequence ID" value="AAL26880.1"/>
    <property type="molecule type" value="mRNA"/>
</dbReference>
<dbReference type="EMBL" id="AY009151">
    <property type="protein sequence ID" value="AAG31004.1"/>
    <property type="molecule type" value="mRNA"/>
</dbReference>
<dbReference type="EMBL" id="BC005400">
    <property type="protein sequence ID" value="AAH05400.1"/>
    <property type="molecule type" value="mRNA"/>
</dbReference>
<dbReference type="EMBL" id="BC008504">
    <property type="protein sequence ID" value="AAH08504.1"/>
    <property type="molecule type" value="mRNA"/>
</dbReference>
<dbReference type="CCDS" id="CCDS3984.1"/>
<dbReference type="RefSeq" id="NP_001253967.1">
    <property type="nucleotide sequence ID" value="NM_001267038.2"/>
</dbReference>
<dbReference type="RefSeq" id="NP_071428.2">
    <property type="nucleotide sequence ID" value="NM_022145.4"/>
</dbReference>
<dbReference type="RefSeq" id="XP_011541838.1">
    <property type="nucleotide sequence ID" value="XM_011543536.3"/>
</dbReference>
<dbReference type="RefSeq" id="XP_016865179.1">
    <property type="nucleotide sequence ID" value="XM_017009690.2"/>
</dbReference>
<dbReference type="RefSeq" id="XP_016865180.1">
    <property type="nucleotide sequence ID" value="XM_017009691.1"/>
</dbReference>
<dbReference type="RefSeq" id="XP_016865181.1">
    <property type="nucleotide sequence ID" value="XM_017009692.2"/>
</dbReference>
<dbReference type="RefSeq" id="XP_054209037.1">
    <property type="nucleotide sequence ID" value="XM_054353062.1"/>
</dbReference>
<dbReference type="RefSeq" id="XP_054209038.1">
    <property type="nucleotide sequence ID" value="XM_054353063.1"/>
</dbReference>
<dbReference type="PDB" id="7PB4">
    <property type="method" value="X-ray"/>
    <property type="resolution" value="2.49 A"/>
    <property type="chains" value="K=165-269"/>
</dbReference>
<dbReference type="PDB" id="7PKN">
    <property type="method" value="EM"/>
    <property type="resolution" value="3.20 A"/>
    <property type="chains" value="K=1-269"/>
</dbReference>
<dbReference type="PDB" id="7QOO">
    <property type="method" value="EM"/>
    <property type="resolution" value="4.60 A"/>
    <property type="chains" value="K=1-269"/>
</dbReference>
<dbReference type="PDB" id="7R5S">
    <property type="method" value="EM"/>
    <property type="resolution" value="2.83 A"/>
    <property type="chains" value="K=1-269"/>
</dbReference>
<dbReference type="PDB" id="7R5V">
    <property type="method" value="EM"/>
    <property type="resolution" value="4.55 A"/>
    <property type="chains" value="K=1-269"/>
</dbReference>
<dbReference type="PDB" id="7XHN">
    <property type="method" value="EM"/>
    <property type="resolution" value="3.71 A"/>
    <property type="chains" value="K=1-269"/>
</dbReference>
<dbReference type="PDB" id="7XHO">
    <property type="method" value="EM"/>
    <property type="resolution" value="3.29 A"/>
    <property type="chains" value="K=1-269"/>
</dbReference>
<dbReference type="PDB" id="7YWX">
    <property type="method" value="EM"/>
    <property type="resolution" value="12.00 A"/>
    <property type="chains" value="K=1-269"/>
</dbReference>
<dbReference type="PDB" id="7YYH">
    <property type="method" value="EM"/>
    <property type="resolution" value="8.90 A"/>
    <property type="chains" value="K=1-269"/>
</dbReference>
<dbReference type="PDBsum" id="7PB4"/>
<dbReference type="PDBsum" id="7PKN"/>
<dbReference type="PDBsum" id="7QOO"/>
<dbReference type="PDBsum" id="7R5S"/>
<dbReference type="PDBsum" id="7R5V"/>
<dbReference type="PDBsum" id="7XHN"/>
<dbReference type="PDBsum" id="7XHO"/>
<dbReference type="PDBsum" id="7YWX"/>
<dbReference type="PDBsum" id="7YYH"/>
<dbReference type="EMDB" id="EMD-13473"/>
<dbReference type="EMDB" id="EMD-14098"/>
<dbReference type="EMDB" id="EMD-14336"/>
<dbReference type="EMDB" id="EMD-14341"/>
<dbReference type="EMDB" id="EMD-14351"/>
<dbReference type="EMDB" id="EMD-14375"/>
<dbReference type="EMDB" id="EMD-33196"/>
<dbReference type="EMDB" id="EMD-33197"/>
<dbReference type="SMR" id="Q9BS16"/>
<dbReference type="BioGRID" id="122063">
    <property type="interactions" value="77"/>
</dbReference>
<dbReference type="ComplexPortal" id="CPX-5646">
    <property type="entry name" value="Kinetochore CCAN complex"/>
</dbReference>
<dbReference type="CORUM" id="Q9BS16"/>
<dbReference type="FunCoup" id="Q9BS16">
    <property type="interactions" value="1740"/>
</dbReference>
<dbReference type="IntAct" id="Q9BS16">
    <property type="interactions" value="28"/>
</dbReference>
<dbReference type="MINT" id="Q9BS16"/>
<dbReference type="STRING" id="9606.ENSP00000379911"/>
<dbReference type="GlyGen" id="Q9BS16">
    <property type="glycosylation" value="1 site, 1 O-linked glycan (1 site)"/>
</dbReference>
<dbReference type="iPTMnet" id="Q9BS16"/>
<dbReference type="PhosphoSitePlus" id="Q9BS16"/>
<dbReference type="BioMuta" id="CENPK"/>
<dbReference type="DMDM" id="74732954"/>
<dbReference type="jPOST" id="Q9BS16"/>
<dbReference type="MassIVE" id="Q9BS16"/>
<dbReference type="PaxDb" id="9606-ENSP00000379911"/>
<dbReference type="PeptideAtlas" id="Q9BS16"/>
<dbReference type="ProteomicsDB" id="78857"/>
<dbReference type="Pumba" id="Q9BS16"/>
<dbReference type="Antibodypedia" id="23756">
    <property type="antibodies" value="190 antibodies from 26 providers"/>
</dbReference>
<dbReference type="DNASU" id="64105"/>
<dbReference type="Ensembl" id="ENST00000242872.7">
    <property type="protein sequence ID" value="ENSP00000242872.3"/>
    <property type="gene ID" value="ENSG00000123219.13"/>
</dbReference>
<dbReference type="Ensembl" id="ENST00000396679.6">
    <property type="protein sequence ID" value="ENSP00000379911.1"/>
    <property type="gene ID" value="ENSG00000123219.13"/>
</dbReference>
<dbReference type="Ensembl" id="ENST00000514814.5">
    <property type="protein sequence ID" value="ENSP00000422421.1"/>
    <property type="gene ID" value="ENSG00000123219.13"/>
</dbReference>
<dbReference type="GeneID" id="64105"/>
<dbReference type="KEGG" id="hsa:64105"/>
<dbReference type="MANE-Select" id="ENST00000396679.6">
    <property type="protein sequence ID" value="ENSP00000379911.1"/>
    <property type="RefSeq nucleotide sequence ID" value="NM_022145.5"/>
    <property type="RefSeq protein sequence ID" value="NP_071428.2"/>
</dbReference>
<dbReference type="UCSC" id="uc003jts.4">
    <property type="organism name" value="human"/>
</dbReference>
<dbReference type="AGR" id="HGNC:29479"/>
<dbReference type="CTD" id="64105"/>
<dbReference type="DisGeNET" id="64105"/>
<dbReference type="GeneCards" id="CENPK"/>
<dbReference type="HGNC" id="HGNC:29479">
    <property type="gene designation" value="CENPK"/>
</dbReference>
<dbReference type="HPA" id="ENSG00000123219">
    <property type="expression patterns" value="Tissue enhanced (bone marrow, lymphoid tissue)"/>
</dbReference>
<dbReference type="MIM" id="611502">
    <property type="type" value="gene"/>
</dbReference>
<dbReference type="neXtProt" id="NX_Q9BS16"/>
<dbReference type="OpenTargets" id="ENSG00000123219"/>
<dbReference type="PharmGKB" id="PA145149171"/>
<dbReference type="VEuPathDB" id="HostDB:ENSG00000123219"/>
<dbReference type="eggNOG" id="ENOG502QVGW">
    <property type="taxonomic scope" value="Eukaryota"/>
</dbReference>
<dbReference type="GeneTree" id="ENSGT00390000006243"/>
<dbReference type="InParanoid" id="Q9BS16"/>
<dbReference type="OMA" id="QNEIILC"/>
<dbReference type="OrthoDB" id="9445768at2759"/>
<dbReference type="PAN-GO" id="Q9BS16">
    <property type="GO annotations" value="1 GO annotation based on evolutionary models"/>
</dbReference>
<dbReference type="PhylomeDB" id="Q9BS16"/>
<dbReference type="TreeFam" id="TF333264"/>
<dbReference type="PathwayCommons" id="Q9BS16"/>
<dbReference type="Reactome" id="R-HSA-141444">
    <property type="pathway name" value="Amplification of signal from unattached kinetochores via a MAD2 inhibitory signal"/>
</dbReference>
<dbReference type="Reactome" id="R-HSA-2467813">
    <property type="pathway name" value="Separation of Sister Chromatids"/>
</dbReference>
<dbReference type="Reactome" id="R-HSA-2500257">
    <property type="pathway name" value="Resolution of Sister Chromatid Cohesion"/>
</dbReference>
<dbReference type="Reactome" id="R-HSA-5663220">
    <property type="pathway name" value="RHO GTPases Activate Formins"/>
</dbReference>
<dbReference type="Reactome" id="R-HSA-606279">
    <property type="pathway name" value="Deposition of new CENPA-containing nucleosomes at the centromere"/>
</dbReference>
<dbReference type="Reactome" id="R-HSA-68877">
    <property type="pathway name" value="Mitotic Prometaphase"/>
</dbReference>
<dbReference type="Reactome" id="R-HSA-9648025">
    <property type="pathway name" value="EML4 and NUDC in mitotic spindle formation"/>
</dbReference>
<dbReference type="SignaLink" id="Q9BS16"/>
<dbReference type="SIGNOR" id="Q9BS16"/>
<dbReference type="BioGRID-ORCS" id="64105">
    <property type="hits" value="758 hits in 1154 CRISPR screens"/>
</dbReference>
<dbReference type="ChiTaRS" id="CENPK">
    <property type="organism name" value="human"/>
</dbReference>
<dbReference type="GeneWiki" id="CENPK"/>
<dbReference type="GenomeRNAi" id="64105"/>
<dbReference type="Pharos" id="Q9BS16">
    <property type="development level" value="Tbio"/>
</dbReference>
<dbReference type="PRO" id="PR:Q9BS16"/>
<dbReference type="Proteomes" id="UP000005640">
    <property type="component" value="Chromosome 5"/>
</dbReference>
<dbReference type="RNAct" id="Q9BS16">
    <property type="molecule type" value="protein"/>
</dbReference>
<dbReference type="Bgee" id="ENSG00000123219">
    <property type="expression patterns" value="Expressed in oocyte and 130 other cell types or tissues"/>
</dbReference>
<dbReference type="ExpressionAtlas" id="Q9BS16">
    <property type="expression patterns" value="baseline and differential"/>
</dbReference>
<dbReference type="GO" id="GO:0005829">
    <property type="term" value="C:cytosol"/>
    <property type="evidence" value="ECO:0000304"/>
    <property type="project" value="Reactome"/>
</dbReference>
<dbReference type="GO" id="GO:0000939">
    <property type="term" value="C:inner kinetochore"/>
    <property type="evidence" value="ECO:0000353"/>
    <property type="project" value="ComplexPortal"/>
</dbReference>
<dbReference type="GO" id="GO:0005654">
    <property type="term" value="C:nucleoplasm"/>
    <property type="evidence" value="ECO:0000304"/>
    <property type="project" value="Reactome"/>
</dbReference>
<dbReference type="GO" id="GO:0005634">
    <property type="term" value="C:nucleus"/>
    <property type="evidence" value="ECO:0000303"/>
    <property type="project" value="ComplexPortal"/>
</dbReference>
<dbReference type="GO" id="GO:0007059">
    <property type="term" value="P:chromosome segregation"/>
    <property type="evidence" value="ECO:0000303"/>
    <property type="project" value="ComplexPortal"/>
</dbReference>
<dbReference type="GO" id="GO:0051382">
    <property type="term" value="P:kinetochore assembly"/>
    <property type="evidence" value="ECO:0007669"/>
    <property type="project" value="InterPro"/>
</dbReference>
<dbReference type="GO" id="GO:0000070">
    <property type="term" value="P:mitotic sister chromatid segregation"/>
    <property type="evidence" value="ECO:0000318"/>
    <property type="project" value="GO_Central"/>
</dbReference>
<dbReference type="InterPro" id="IPR020993">
    <property type="entry name" value="Centromere_CenpK"/>
</dbReference>
<dbReference type="PANTHER" id="PTHR14401">
    <property type="entry name" value="CENTROMERE PROTEIN K"/>
    <property type="match status" value="1"/>
</dbReference>
<dbReference type="PANTHER" id="PTHR14401:SF6">
    <property type="entry name" value="CENTROMERE PROTEIN K"/>
    <property type="match status" value="1"/>
</dbReference>
<dbReference type="Pfam" id="PF11802">
    <property type="entry name" value="CENP-K"/>
    <property type="match status" value="1"/>
</dbReference>